<name>VP48_NPVOP</name>
<reference key="1">
    <citation type="journal article" date="1990" name="J. Gen. Virol.">
        <title>The p6.5 gene region of a nuclear polyhedrosis virus of Orgyia pseudotsugata: DNA sequence and transcriptional analysis of four late genes.</title>
        <authorList>
            <person name="Russell R.L.Q."/>
            <person name="Rohrmann G.F."/>
        </authorList>
    </citation>
    <scope>NUCLEOTIDE SEQUENCE [GENOMIC DNA]</scope>
</reference>
<reference key="2">
    <citation type="journal article" date="1990" name="Virology">
        <title>A capsid-associated protein of the multicapsid nuclear polyhedrosis virus of Orgyia pseudotsugata: genetic location, sequence, transcriptional mapping, and immunocytochemical characterization.</title>
        <authorList>
            <person name="Mueller R."/>
            <person name="Pearson M.N."/>
            <person name="Russell R.L.Q."/>
            <person name="Rohrmann G.F."/>
        </authorList>
    </citation>
    <scope>NUCLEOTIDE SEQUENCE [GENOMIC DNA]</scope>
</reference>
<reference key="3">
    <citation type="journal article" date="1997" name="Virology">
        <title>The sequence of the Orgyia pseudotsugata multinucleocapsid nuclear polyhedrosis virus genome.</title>
        <authorList>
            <person name="Ahrens C.H."/>
            <person name="Russell R.R."/>
            <person name="Funk C.J."/>
            <person name="Evans J."/>
            <person name="Harwood S."/>
            <person name="Rohrmann G.F."/>
        </authorList>
    </citation>
    <scope>NUCLEOTIDE SEQUENCE [LARGE SCALE GENOMIC DNA]</scope>
</reference>
<organism>
    <name type="scientific">Orgyia pseudotsugata multicapsid polyhedrosis virus</name>
    <name type="common">OpMNPV</name>
    <dbReference type="NCBI Taxonomy" id="262177"/>
    <lineage>
        <taxon>Viruses</taxon>
        <taxon>Viruses incertae sedis</taxon>
        <taxon>Naldaviricetes</taxon>
        <taxon>Lefavirales</taxon>
        <taxon>Baculoviridae</taxon>
        <taxon>Alphabaculovirus</taxon>
        <taxon>Alphabaculovirus orpseudotsugatae</taxon>
    </lineage>
</organism>
<sequence length="411" mass="47880">MHTYKLLYNLRFNAVHGLEHRFEHVRFEAQMHQREIDSLTFLTAKYFDQHSLIDIKGLTFFTEFNKCIVAIKAKFEAQPDSENLHGIKSIMGMFLRDEFIKQVPHFKTIMEYLKTYYNPIAVPDVRAFMCDEQCRPGGKISCLTCKCNYLSAALTTLDSGLQDGWDIFLRPMFGMPLLIYVISKTDFSSQPDVVNENNLMTQMFVQFFYNLLCDKAYSMHTKQKACEPLVKDCKRVITLLSAKDRHRLLTMLNEQCNSASTAANAPKLLMPFKNFMIKMGQHTKIKKVNKIAATVLIGFFLRQYIESMPSHYLQNLRGLLKDEHNDSRDEGCSAAELEMLNVCRYIFKRYSDKDVAVVVEKLKKITVEIMNVLIFEKIVPETFIRRIIVDYQLDNEISLLLDLNHDCFDRR</sequence>
<keyword id="KW-0426">Late protein</keyword>
<keyword id="KW-1185">Reference proteome</keyword>
<evidence type="ECO:0000305" key="1"/>
<accession>P24651</accession>
<feature type="chain" id="PRO_0000132911" description="p48 protein">
    <location>
        <begin position="1"/>
        <end position="411"/>
    </location>
</feature>
<comment type="similarity">
    <text evidence="1">Belongs to the baculoviridae p48 family.</text>
</comment>
<protein>
    <recommendedName>
        <fullName>p48 protein</fullName>
    </recommendedName>
</protein>
<gene>
    <name type="primary">P48</name>
    <name type="ORF">ORF104</name>
</gene>
<proteinExistence type="inferred from homology"/>
<organismHost>
    <name type="scientific">Orgyia pseudotsugata</name>
    <name type="common">Douglas-fir tussock moth</name>
    <dbReference type="NCBI Taxonomy" id="33414"/>
</organismHost>
<dbReference type="EMBL" id="D13959">
    <property type="protein sequence ID" value="BAA03060.1"/>
    <property type="molecule type" value="Genomic_DNA"/>
</dbReference>
<dbReference type="EMBL" id="U75930">
    <property type="protein sequence ID" value="AAC59103.1"/>
    <property type="molecule type" value="Genomic_DNA"/>
</dbReference>
<dbReference type="PIR" id="A34526">
    <property type="entry name" value="A34526"/>
</dbReference>
<dbReference type="RefSeq" id="NP_046260.1">
    <property type="nucleotide sequence ID" value="NC_001875.2"/>
</dbReference>
<dbReference type="KEGG" id="vg:912104"/>
<dbReference type="OrthoDB" id="4662at10239"/>
<dbReference type="Proteomes" id="UP000009248">
    <property type="component" value="Genome"/>
</dbReference>
<dbReference type="InterPro" id="IPR006962">
    <property type="entry name" value="P48_Baculovir"/>
</dbReference>
<dbReference type="Pfam" id="PF04878">
    <property type="entry name" value="Baculo_p48"/>
    <property type="match status" value="1"/>
</dbReference>